<proteinExistence type="evidence at transcript level"/>
<organism>
    <name type="scientific">Oryza sativa subsp. japonica</name>
    <name type="common">Rice</name>
    <dbReference type="NCBI Taxonomy" id="39947"/>
    <lineage>
        <taxon>Eukaryota</taxon>
        <taxon>Viridiplantae</taxon>
        <taxon>Streptophyta</taxon>
        <taxon>Embryophyta</taxon>
        <taxon>Tracheophyta</taxon>
        <taxon>Spermatophyta</taxon>
        <taxon>Magnoliopsida</taxon>
        <taxon>Liliopsida</taxon>
        <taxon>Poales</taxon>
        <taxon>Poaceae</taxon>
        <taxon>BOP clade</taxon>
        <taxon>Oryzoideae</taxon>
        <taxon>Oryzeae</taxon>
        <taxon>Oryzinae</taxon>
        <taxon>Oryza</taxon>
        <taxon>Oryza sativa</taxon>
    </lineage>
</organism>
<gene>
    <name type="primary">CSLD1</name>
    <name type="ordered locus">Os10g0578200</name>
    <name type="ordered locus">LOC_Os10g42750</name>
    <name type="ORF">OsJ_031301</name>
    <name type="ORF">OSJNBa0035H01.10</name>
</gene>
<name>CSLD1_ORYSJ</name>
<dbReference type="EC" id="2.4.1.-"/>
<dbReference type="EMBL" id="AC027037">
    <property type="protein sequence ID" value="AAL58185.1"/>
    <property type="molecule type" value="Genomic_DNA"/>
</dbReference>
<dbReference type="EMBL" id="DP000086">
    <property type="protein sequence ID" value="AAP55168.1"/>
    <property type="molecule type" value="Genomic_DNA"/>
</dbReference>
<dbReference type="EMBL" id="AP008216">
    <property type="protein sequence ID" value="BAF27335.1"/>
    <property type="status" value="ALT_SEQ"/>
    <property type="molecule type" value="Genomic_DNA"/>
</dbReference>
<dbReference type="EMBL" id="AP014966">
    <property type="status" value="NOT_ANNOTATED_CDS"/>
    <property type="molecule type" value="Genomic_DNA"/>
</dbReference>
<dbReference type="EMBL" id="CM000147">
    <property type="protein sequence ID" value="EAZ17092.1"/>
    <property type="molecule type" value="Genomic_DNA"/>
</dbReference>
<dbReference type="EMBL" id="AK110534">
    <property type="status" value="NOT_ANNOTATED_CDS"/>
    <property type="molecule type" value="mRNA"/>
</dbReference>
<dbReference type="EMBL" id="BK000089">
    <property type="protein sequence ID" value="DAA01752.1"/>
    <property type="molecule type" value="Genomic_DNA"/>
</dbReference>
<dbReference type="RefSeq" id="XP_015614302.1">
    <property type="nucleotide sequence ID" value="XM_015758816.1"/>
</dbReference>
<dbReference type="RefSeq" id="XP_015614303.1">
    <property type="nucleotide sequence ID" value="XM_015758817.1"/>
</dbReference>
<dbReference type="RefSeq" id="XP_015614304.1">
    <property type="nucleotide sequence ID" value="XM_015758818.1"/>
</dbReference>
<dbReference type="RefSeq" id="XP_015614305.1">
    <property type="nucleotide sequence ID" value="XM_015758819.1"/>
</dbReference>
<dbReference type="SMR" id="Q8W3F9"/>
<dbReference type="FunCoup" id="Q8W3F9">
    <property type="interactions" value="6"/>
</dbReference>
<dbReference type="STRING" id="39947.Q8W3F9"/>
<dbReference type="CAZy" id="GT2">
    <property type="family name" value="Glycosyltransferase Family 2"/>
</dbReference>
<dbReference type="PaxDb" id="39947-Q8W3F9"/>
<dbReference type="EnsemblPlants" id="Os10t0578200-01">
    <property type="protein sequence ID" value="Os10t0578200-01"/>
    <property type="gene ID" value="Os10g0578200"/>
</dbReference>
<dbReference type="Gramene" id="Os10t0578200-01">
    <property type="protein sequence ID" value="Os10t0578200-01"/>
    <property type="gene ID" value="Os10g0578200"/>
</dbReference>
<dbReference type="KEGG" id="dosa:Os10g0578200"/>
<dbReference type="InParanoid" id="Q8W3F9"/>
<dbReference type="OrthoDB" id="72851at2759"/>
<dbReference type="PlantReactome" id="R-OSA-1119314">
    <property type="pathway name" value="Cellulose biosynthesis"/>
</dbReference>
<dbReference type="PlantReactome" id="R-OSA-9639861">
    <property type="pathway name" value="Development of root hair"/>
</dbReference>
<dbReference type="Proteomes" id="UP000000763">
    <property type="component" value="Chromosome 10"/>
</dbReference>
<dbReference type="Proteomes" id="UP000007752">
    <property type="component" value="Chromosome 10"/>
</dbReference>
<dbReference type="Proteomes" id="UP000059680">
    <property type="component" value="Chromosome 10"/>
</dbReference>
<dbReference type="GO" id="GO:0000139">
    <property type="term" value="C:Golgi membrane"/>
    <property type="evidence" value="ECO:0007669"/>
    <property type="project" value="UniProtKB-SubCell"/>
</dbReference>
<dbReference type="GO" id="GO:0005886">
    <property type="term" value="C:plasma membrane"/>
    <property type="evidence" value="ECO:0000318"/>
    <property type="project" value="GO_Central"/>
</dbReference>
<dbReference type="GO" id="GO:0016760">
    <property type="term" value="F:cellulose synthase (UDP-forming) activity"/>
    <property type="evidence" value="ECO:0007669"/>
    <property type="project" value="InterPro"/>
</dbReference>
<dbReference type="GO" id="GO:0071555">
    <property type="term" value="P:cell wall organization"/>
    <property type="evidence" value="ECO:0007669"/>
    <property type="project" value="UniProtKB-KW"/>
</dbReference>
<dbReference type="GO" id="GO:0030244">
    <property type="term" value="P:cellulose biosynthetic process"/>
    <property type="evidence" value="ECO:0007669"/>
    <property type="project" value="InterPro"/>
</dbReference>
<dbReference type="GO" id="GO:0009833">
    <property type="term" value="P:plant-type primary cell wall biogenesis"/>
    <property type="evidence" value="ECO:0000318"/>
    <property type="project" value="GO_Central"/>
</dbReference>
<dbReference type="FunFam" id="3.30.40.10:FF:000229">
    <property type="entry name" value="Cellulose synthase-like protein D3"/>
    <property type="match status" value="1"/>
</dbReference>
<dbReference type="FunFam" id="3.90.550.10:FF:000040">
    <property type="entry name" value="cellulose synthase-like protein D3"/>
    <property type="match status" value="1"/>
</dbReference>
<dbReference type="Gene3D" id="3.90.550.10">
    <property type="entry name" value="Spore Coat Polysaccharide Biosynthesis Protein SpsA, Chain A"/>
    <property type="match status" value="1"/>
</dbReference>
<dbReference type="Gene3D" id="3.30.40.10">
    <property type="entry name" value="Zinc/RING finger domain, C3HC4 (zinc finger)"/>
    <property type="match status" value="1"/>
</dbReference>
<dbReference type="InterPro" id="IPR005150">
    <property type="entry name" value="Cellulose_synth"/>
</dbReference>
<dbReference type="InterPro" id="IPR029044">
    <property type="entry name" value="Nucleotide-diphossugar_trans"/>
</dbReference>
<dbReference type="InterPro" id="IPR013083">
    <property type="entry name" value="Znf_RING/FYVE/PHD"/>
</dbReference>
<dbReference type="PANTHER" id="PTHR13301">
    <property type="entry name" value="X-BOX TRANSCRIPTION FACTOR-RELATED"/>
    <property type="match status" value="1"/>
</dbReference>
<dbReference type="Pfam" id="PF03552">
    <property type="entry name" value="Cellulose_synt"/>
    <property type="match status" value="1"/>
</dbReference>
<dbReference type="Pfam" id="PF14570">
    <property type="entry name" value="zf-RING_4"/>
    <property type="match status" value="1"/>
</dbReference>
<dbReference type="SUPFAM" id="SSF57850">
    <property type="entry name" value="RING/U-box"/>
    <property type="match status" value="1"/>
</dbReference>
<accession>Q8W3F9</accession>
<accession>Q0IVD0</accession>
<accession>Q7XBU0</accession>
<reference key="1">
    <citation type="journal article" date="2003" name="Science">
        <title>In-depth view of structure, activity, and evolution of rice chromosome 10.</title>
        <authorList>
            <person name="Yu Y."/>
            <person name="Rambo T."/>
            <person name="Currie J."/>
            <person name="Saski C."/>
            <person name="Kim H.-R."/>
            <person name="Collura K."/>
            <person name="Thompson S."/>
            <person name="Simmons J."/>
            <person name="Yang T.-J."/>
            <person name="Nah G."/>
            <person name="Patel A.J."/>
            <person name="Thurmond S."/>
            <person name="Henry D."/>
            <person name="Oates R."/>
            <person name="Palmer M."/>
            <person name="Pries G."/>
            <person name="Gibson J."/>
            <person name="Anderson H."/>
            <person name="Paradkar M."/>
            <person name="Crane L."/>
            <person name="Dale J."/>
            <person name="Carver M.B."/>
            <person name="Wood T."/>
            <person name="Frisch D."/>
            <person name="Engler F."/>
            <person name="Soderlund C."/>
            <person name="Palmer L.E."/>
            <person name="Teytelman L."/>
            <person name="Nascimento L."/>
            <person name="De la Bastide M."/>
            <person name="Spiegel L."/>
            <person name="Ware D."/>
            <person name="O'Shaughnessy A."/>
            <person name="Dike S."/>
            <person name="Dedhia N."/>
            <person name="Preston R."/>
            <person name="Huang E."/>
            <person name="Ferraro K."/>
            <person name="Kuit K."/>
            <person name="Miller B."/>
            <person name="Zutavern T."/>
            <person name="Katzenberger F."/>
            <person name="Muller S."/>
            <person name="Balija V."/>
            <person name="Martienssen R.A."/>
            <person name="Stein L."/>
            <person name="Minx P."/>
            <person name="Johnson D."/>
            <person name="Cordum H."/>
            <person name="Mardis E."/>
            <person name="Cheng Z."/>
            <person name="Jiang J."/>
            <person name="Wilson R."/>
            <person name="McCombie W.R."/>
            <person name="Wing R.A."/>
            <person name="Yuan Q."/>
            <person name="Ouyang S."/>
            <person name="Liu J."/>
            <person name="Jones K.M."/>
            <person name="Gansberger K."/>
            <person name="Moffat K."/>
            <person name="Hill J."/>
            <person name="Tsitrin T."/>
            <person name="Overton L."/>
            <person name="Bera J."/>
            <person name="Kim M."/>
            <person name="Jin S."/>
            <person name="Tallon L."/>
            <person name="Ciecko A."/>
            <person name="Pai G."/>
            <person name="Van Aken S."/>
            <person name="Utterback T."/>
            <person name="Reidmuller S."/>
            <person name="Bormann J."/>
            <person name="Feldblyum T."/>
            <person name="Hsiao J."/>
            <person name="Zismann V."/>
            <person name="Blunt S."/>
            <person name="de Vazeille A.R."/>
            <person name="Shaffer T."/>
            <person name="Koo H."/>
            <person name="Suh B."/>
            <person name="Yang Q."/>
            <person name="Haas B."/>
            <person name="Peterson J."/>
            <person name="Pertea M."/>
            <person name="Volfovsky N."/>
            <person name="Wortman J."/>
            <person name="White O."/>
            <person name="Salzberg S.L."/>
            <person name="Fraser C.M."/>
            <person name="Buell C.R."/>
            <person name="Messing J."/>
            <person name="Song R."/>
            <person name="Fuks G."/>
            <person name="Llaca V."/>
            <person name="Kovchak S."/>
            <person name="Young S."/>
            <person name="Bowers J.E."/>
            <person name="Paterson A.H."/>
            <person name="Johns M.A."/>
            <person name="Mao L."/>
            <person name="Pan H."/>
            <person name="Dean R.A."/>
        </authorList>
    </citation>
    <scope>NUCLEOTIDE SEQUENCE [LARGE SCALE GENOMIC DNA]</scope>
    <source>
        <strain>cv. Nipponbare</strain>
    </source>
</reference>
<reference key="2">
    <citation type="journal article" date="2005" name="Nature">
        <title>The map-based sequence of the rice genome.</title>
        <authorList>
            <consortium name="International rice genome sequencing project (IRGSP)"/>
        </authorList>
    </citation>
    <scope>NUCLEOTIDE SEQUENCE [LARGE SCALE GENOMIC DNA]</scope>
    <source>
        <strain>cv. Nipponbare</strain>
    </source>
</reference>
<reference key="3">
    <citation type="journal article" date="2008" name="Nucleic Acids Res.">
        <title>The rice annotation project database (RAP-DB): 2008 update.</title>
        <authorList>
            <consortium name="The rice annotation project (RAP)"/>
        </authorList>
    </citation>
    <scope>GENOME REANNOTATION</scope>
    <source>
        <strain>cv. Nipponbare</strain>
    </source>
</reference>
<reference key="4">
    <citation type="journal article" date="2013" name="Rice">
        <title>Improvement of the Oryza sativa Nipponbare reference genome using next generation sequence and optical map data.</title>
        <authorList>
            <person name="Kawahara Y."/>
            <person name="de la Bastide M."/>
            <person name="Hamilton J.P."/>
            <person name="Kanamori H."/>
            <person name="McCombie W.R."/>
            <person name="Ouyang S."/>
            <person name="Schwartz D.C."/>
            <person name="Tanaka T."/>
            <person name="Wu J."/>
            <person name="Zhou S."/>
            <person name="Childs K.L."/>
            <person name="Davidson R.M."/>
            <person name="Lin H."/>
            <person name="Quesada-Ocampo L."/>
            <person name="Vaillancourt B."/>
            <person name="Sakai H."/>
            <person name="Lee S.S."/>
            <person name="Kim J."/>
            <person name="Numa H."/>
            <person name="Itoh T."/>
            <person name="Buell C.R."/>
            <person name="Matsumoto T."/>
        </authorList>
    </citation>
    <scope>GENOME REANNOTATION</scope>
    <source>
        <strain>cv. Nipponbare</strain>
    </source>
</reference>
<reference key="5">
    <citation type="journal article" date="2005" name="PLoS Biol.">
        <title>The genomes of Oryza sativa: a history of duplications.</title>
        <authorList>
            <person name="Yu J."/>
            <person name="Wang J."/>
            <person name="Lin W."/>
            <person name="Li S."/>
            <person name="Li H."/>
            <person name="Zhou J."/>
            <person name="Ni P."/>
            <person name="Dong W."/>
            <person name="Hu S."/>
            <person name="Zeng C."/>
            <person name="Zhang J."/>
            <person name="Zhang Y."/>
            <person name="Li R."/>
            <person name="Xu Z."/>
            <person name="Li S."/>
            <person name="Li X."/>
            <person name="Zheng H."/>
            <person name="Cong L."/>
            <person name="Lin L."/>
            <person name="Yin J."/>
            <person name="Geng J."/>
            <person name="Li G."/>
            <person name="Shi J."/>
            <person name="Liu J."/>
            <person name="Lv H."/>
            <person name="Li J."/>
            <person name="Wang J."/>
            <person name="Deng Y."/>
            <person name="Ran L."/>
            <person name="Shi X."/>
            <person name="Wang X."/>
            <person name="Wu Q."/>
            <person name="Li C."/>
            <person name="Ren X."/>
            <person name="Wang J."/>
            <person name="Wang X."/>
            <person name="Li D."/>
            <person name="Liu D."/>
            <person name="Zhang X."/>
            <person name="Ji Z."/>
            <person name="Zhao W."/>
            <person name="Sun Y."/>
            <person name="Zhang Z."/>
            <person name="Bao J."/>
            <person name="Han Y."/>
            <person name="Dong L."/>
            <person name="Ji J."/>
            <person name="Chen P."/>
            <person name="Wu S."/>
            <person name="Liu J."/>
            <person name="Xiao Y."/>
            <person name="Bu D."/>
            <person name="Tan J."/>
            <person name="Yang L."/>
            <person name="Ye C."/>
            <person name="Zhang J."/>
            <person name="Xu J."/>
            <person name="Zhou Y."/>
            <person name="Yu Y."/>
            <person name="Zhang B."/>
            <person name="Zhuang S."/>
            <person name="Wei H."/>
            <person name="Liu B."/>
            <person name="Lei M."/>
            <person name="Yu H."/>
            <person name="Li Y."/>
            <person name="Xu H."/>
            <person name="Wei S."/>
            <person name="He X."/>
            <person name="Fang L."/>
            <person name="Zhang Z."/>
            <person name="Zhang Y."/>
            <person name="Huang X."/>
            <person name="Su Z."/>
            <person name="Tong W."/>
            <person name="Li J."/>
            <person name="Tong Z."/>
            <person name="Li S."/>
            <person name="Ye J."/>
            <person name="Wang L."/>
            <person name="Fang L."/>
            <person name="Lei T."/>
            <person name="Chen C.-S."/>
            <person name="Chen H.-C."/>
            <person name="Xu Z."/>
            <person name="Li H."/>
            <person name="Huang H."/>
            <person name="Zhang F."/>
            <person name="Xu H."/>
            <person name="Li N."/>
            <person name="Zhao C."/>
            <person name="Li S."/>
            <person name="Dong L."/>
            <person name="Huang Y."/>
            <person name="Li L."/>
            <person name="Xi Y."/>
            <person name="Qi Q."/>
            <person name="Li W."/>
            <person name="Zhang B."/>
            <person name="Hu W."/>
            <person name="Zhang Y."/>
            <person name="Tian X."/>
            <person name="Jiao Y."/>
            <person name="Liang X."/>
            <person name="Jin J."/>
            <person name="Gao L."/>
            <person name="Zheng W."/>
            <person name="Hao B."/>
            <person name="Liu S.-M."/>
            <person name="Wang W."/>
            <person name="Yuan L."/>
            <person name="Cao M."/>
            <person name="McDermott J."/>
            <person name="Samudrala R."/>
            <person name="Wang J."/>
            <person name="Wong G.K.-S."/>
            <person name="Yang H."/>
        </authorList>
    </citation>
    <scope>NUCLEOTIDE SEQUENCE [LARGE SCALE GENOMIC DNA]</scope>
    <source>
        <strain>cv. Nipponbare</strain>
    </source>
</reference>
<reference key="6">
    <citation type="journal article" date="2003" name="Science">
        <title>Collection, mapping, and annotation of over 28,000 cDNA clones from japonica rice.</title>
        <authorList>
            <consortium name="The rice full-length cDNA consortium"/>
        </authorList>
    </citation>
    <scope>NUCLEOTIDE SEQUENCE [LARGE SCALE MRNA] OF 871-1127</scope>
    <source>
        <strain>cv. Nipponbare</strain>
    </source>
</reference>
<reference key="7">
    <citation type="journal article" date="2002" name="Plant Physiol.">
        <title>Cellulose synthase-like genes of rice.</title>
        <authorList>
            <person name="Hazen S.P."/>
            <person name="Scott-Craig J.S."/>
            <person name="Walton J.D."/>
        </authorList>
    </citation>
    <scope>IDENTIFICATION</scope>
</reference>
<reference key="8">
    <citation type="journal article" date="2007" name="Plant Physiol.">
        <title>OsCSLD1, a cellulose synthase-like D1 gene, is required for root hair morphogenesis in rice.</title>
        <authorList>
            <person name="Kim C.M."/>
            <person name="Park S.H."/>
            <person name="Je B.I."/>
            <person name="Park S.H."/>
            <person name="Park S.J."/>
            <person name="Piao H.L."/>
            <person name="Eun M.Y."/>
            <person name="Dolan L."/>
            <person name="Han C.-D."/>
        </authorList>
    </citation>
    <scope>FUNCTION</scope>
    <scope>DISRUPTION PHENOTYPE</scope>
    <scope>TISSUE SPECIFICITY</scope>
    <scope>DEVELOPMENTAL STAGE</scope>
    <scope>INDUCTION</scope>
</reference>
<sequence>MASKGILKNGGKPPTAPSSAAPTVVFGRRTDSGRFISYSRDDLDSEISSVDFQDYHVHIPMTPDNQPMDPAAGDEQQYVSSSLFTGGFNSVTRAHVMEKQASSARATVSACMVQGCGSKIMRNGRGADILPCECDFKICVDCFTDAVKGGGGVCPGCKEPYKHAEWEEVVSASNHDAINRALSLPHGHGHGPKMERRLSLVKQNGGAPGEFDHNRWLFETKGTYGYGNAIWPEDDGVAGHPKELMSKPWRPLTRKLRIQAAVISPYRLLVLIRLVALGLFLMWRIKHQNEDAIWLWGMSIVCELWFALSWVLDQLPKLCPINRATDLSVLKDKFETPTPSNPTGKSDLPGIDIFVSTADPEKEPVLVTANTILSILAADYPVDKLACYVSDDGGALLTFEAMAEAASFANLWVPFCRKHEIEPRNPDSYFNLKRDPFKNKVKGDFVKDRRRVKREYDEFKVRVNGLPDAIRRRSDAYHAREEIQAMNLQREKMKAGGDEQQLEPIKIPKATWMADGTHWPGTWLQASPEHARGDHAGIIQVMLKPPSPSPSSSGGDMEKRVDLSGVDTRLPMLVYVSREKRPGYDHNKKAGAMNALVRASAIMSNGPFILNLDCDHYVYNSKAFREGMCFMMDRGGDRLCYVQFPQRFEGIDPSDRYANHNTVFFDVNMRALDGLQGPVYVGTGCLFRRIALYGFDPPRSKDHTTPWSCCLPRRRRTRSQPQPQEEEEETMALRMDMDGAMNMASFPKKFGNSSFLIDSIPVAEFQGRPLADHPSVKNGRPPGALTIPRETLDASIVAEAISVVSCWYEEKTEWGTRVGWIYGSVTEDVVTGYRMHNRGWKSVYCVTHRDAFRGTAPINLTDRLHQVLRWATGSVEIFFSRNNALFASSKMKVLQRIAYLNVGIYPFTSVFLIVYCFLPALSLFSGQFIVQTLNVTFLTYLLIITITLCLLAMLEIKWSGIALEEWWRNEQFWLIGGTSAHLAAVLQGLLKVIAGIEISFTLTSKQLGDDVDDEFAELYAVKWTSLMIPPLTIIMINLVAIAVGFSRTIYSTIPQWSKLLGGVFFSFWVLAHLYPFAKGLMGRRGRTPTIVYVWSGLVAITISLLWIAIKPPSAQANSQLGGSFSFP</sequence>
<feature type="chain" id="PRO_0000319391" description="Cellulose synthase-like protein D1">
    <location>
        <begin position="1"/>
        <end position="1127"/>
    </location>
</feature>
<feature type="transmembrane region" description="Helical" evidence="1">
    <location>
        <begin position="262"/>
        <end position="282"/>
    </location>
</feature>
<feature type="transmembrane region" description="Helical" evidence="1">
    <location>
        <begin position="292"/>
        <end position="312"/>
    </location>
</feature>
<feature type="transmembrane region" description="Helical" evidence="1">
    <location>
        <begin position="910"/>
        <end position="930"/>
    </location>
</feature>
<feature type="transmembrane region" description="Helical" evidence="1">
    <location>
        <begin position="936"/>
        <end position="956"/>
    </location>
</feature>
<feature type="transmembrane region" description="Helical" evidence="1">
    <location>
        <begin position="982"/>
        <end position="1002"/>
    </location>
</feature>
<feature type="transmembrane region" description="Helical" evidence="1">
    <location>
        <begin position="1025"/>
        <end position="1045"/>
    </location>
</feature>
<feature type="transmembrane region" description="Helical" evidence="1">
    <location>
        <begin position="1059"/>
        <end position="1079"/>
    </location>
</feature>
<feature type="transmembrane region" description="Helical" evidence="1">
    <location>
        <begin position="1089"/>
        <end position="1109"/>
    </location>
</feature>
<feature type="region of interest" description="Disordered" evidence="2">
    <location>
        <begin position="1"/>
        <end position="24"/>
    </location>
</feature>
<feature type="active site" evidence="1">
    <location>
        <position position="392"/>
    </location>
</feature>
<feature type="active site" evidence="1">
    <location>
        <position position="828"/>
    </location>
</feature>
<feature type="sequence conflict" description="In Ref. 6; AK110534." evidence="4" ref="6">
    <original>S</original>
    <variation>P</variation>
    <location>
        <position position="1004"/>
    </location>
</feature>
<protein>
    <recommendedName>
        <fullName>Cellulose synthase-like protein D1</fullName>
        <ecNumber>2.4.1.-</ecNumber>
    </recommendedName>
    <alternativeName>
        <fullName>OsCslD1</fullName>
    </alternativeName>
</protein>
<evidence type="ECO:0000255" key="1"/>
<evidence type="ECO:0000256" key="2">
    <source>
        <dbReference type="SAM" id="MobiDB-lite"/>
    </source>
</evidence>
<evidence type="ECO:0000269" key="3">
    <source>
    </source>
</evidence>
<evidence type="ECO:0000305" key="4"/>
<keyword id="KW-0961">Cell wall biogenesis/degradation</keyword>
<keyword id="KW-0328">Glycosyltransferase</keyword>
<keyword id="KW-0333">Golgi apparatus</keyword>
<keyword id="KW-0472">Membrane</keyword>
<keyword id="KW-1185">Reference proteome</keyword>
<keyword id="KW-0808">Transferase</keyword>
<keyword id="KW-0812">Transmembrane</keyword>
<keyword id="KW-1133">Transmembrane helix</keyword>
<comment type="function">
    <text evidence="3">Thought to be a Golgi-localized beta-glycan synthase that polymerize the backbones of noncellulosic polysaccharides (hemicelluloses) of plant cell wall. Required for synthesis of a cell wall polysaccharide essential for root hair elongation, but not initiation. May be the functional ortholog of Arabidopsis CSLD3/KOJAK.</text>
</comment>
<comment type="subcellular location">
    <subcellularLocation>
        <location evidence="4">Golgi apparatus membrane</location>
        <topology evidence="4">Multi-pass membrane protein</topology>
    </subcellularLocation>
</comment>
<comment type="tissue specificity">
    <text evidence="3">Specifically expressed in root hair cells.</text>
</comment>
<comment type="induction">
    <text evidence="3">Down-regulated by 1-N-naphthylphthalamic acid (NPA), an auxin efflux inhibitor.</text>
</comment>
<comment type="disruption phenotype">
    <text evidence="3">Plants develop short elongated root hair with kinks and swellings along their length.</text>
</comment>
<comment type="similarity">
    <text evidence="4">Belongs to the glycosyltransferase 2 family. Plant cellulose synthase-like D subfamily.</text>
</comment>
<comment type="sequence caution" evidence="4">
    <conflict type="erroneous gene model prediction">
        <sequence resource="EMBL-CDS" id="BAF27335"/>
    </conflict>
</comment>